<organism>
    <name type="scientific">Treponema pallidum (strain Nichols)</name>
    <dbReference type="NCBI Taxonomy" id="243276"/>
    <lineage>
        <taxon>Bacteria</taxon>
        <taxon>Pseudomonadati</taxon>
        <taxon>Spirochaetota</taxon>
        <taxon>Spirochaetia</taxon>
        <taxon>Spirochaetales</taxon>
        <taxon>Treponemataceae</taxon>
        <taxon>Treponema</taxon>
    </lineage>
</organism>
<keyword id="KW-1185">Reference proteome</keyword>
<gene>
    <name type="ordered locus">TP_0018</name>
</gene>
<name>GRAD_TREPA</name>
<feature type="chain" id="PRO_0000177010" description="Putative GreA-associated domains protein">
    <location>
        <begin position="1"/>
        <end position="657"/>
    </location>
</feature>
<feature type="domain" description="GRAD2">
    <location>
        <begin position="1"/>
        <end position="152"/>
    </location>
</feature>
<feature type="domain" description="GRAD1">
    <location>
        <begin position="153"/>
        <end position="657"/>
    </location>
</feature>
<reference key="1">
    <citation type="journal article" date="1998" name="Science">
        <title>Complete genome sequence of Treponema pallidum, the syphilis spirochete.</title>
        <authorList>
            <person name="Fraser C.M."/>
            <person name="Norris S.J."/>
            <person name="Weinstock G.M."/>
            <person name="White O."/>
            <person name="Sutton G.G."/>
            <person name="Dodson R.J."/>
            <person name="Gwinn M.L."/>
            <person name="Hickey E.K."/>
            <person name="Clayton R.A."/>
            <person name="Ketchum K.A."/>
            <person name="Sodergren E."/>
            <person name="Hardham J.M."/>
            <person name="McLeod M.P."/>
            <person name="Salzberg S.L."/>
            <person name="Peterson J.D."/>
            <person name="Khalak H.G."/>
            <person name="Richardson D.L."/>
            <person name="Howell J.K."/>
            <person name="Chidambaram M."/>
            <person name="Utterback T.R."/>
            <person name="McDonald L.A."/>
            <person name="Artiach P."/>
            <person name="Bowman C."/>
            <person name="Cotton M.D."/>
            <person name="Fujii C."/>
            <person name="Garland S.A."/>
            <person name="Hatch B."/>
            <person name="Horst K."/>
            <person name="Roberts K.M."/>
            <person name="Sandusky M."/>
            <person name="Weidman J.F."/>
            <person name="Smith H.O."/>
            <person name="Venter J.C."/>
        </authorList>
    </citation>
    <scope>NUCLEOTIDE SEQUENCE [LARGE SCALE GENOMIC DNA]</scope>
    <source>
        <strain>Nichols</strain>
    </source>
</reference>
<proteinExistence type="predicted"/>
<protein>
    <recommendedName>
        <fullName>Putative GreA-associated domains protein</fullName>
    </recommendedName>
</protein>
<dbReference type="EMBL" id="AE000520">
    <property type="protein sequence ID" value="AAC65010.1"/>
    <property type="molecule type" value="Genomic_DNA"/>
</dbReference>
<dbReference type="PIR" id="G71377">
    <property type="entry name" value="G71377"/>
</dbReference>
<dbReference type="RefSeq" id="WP_010881467.1">
    <property type="nucleotide sequence ID" value="NC_000919.1"/>
</dbReference>
<dbReference type="IntAct" id="O83062">
    <property type="interactions" value="3"/>
</dbReference>
<dbReference type="STRING" id="243276.TP_0018"/>
<dbReference type="EnsemblBacteria" id="AAC65010">
    <property type="protein sequence ID" value="AAC65010"/>
    <property type="gene ID" value="TP_0018"/>
</dbReference>
<dbReference type="KEGG" id="tpa:TP_0018"/>
<dbReference type="PATRIC" id="fig|243276.5.peg.19"/>
<dbReference type="eggNOG" id="COG0782">
    <property type="taxonomic scope" value="Bacteria"/>
</dbReference>
<dbReference type="eggNOG" id="COG1747">
    <property type="taxonomic scope" value="Bacteria"/>
</dbReference>
<dbReference type="HOGENOM" id="CLU_417341_0_0_12"/>
<dbReference type="Proteomes" id="UP000000811">
    <property type="component" value="Chromosome"/>
</dbReference>
<dbReference type="Gene3D" id="1.25.40.10">
    <property type="entry name" value="Tetratricopeptide repeat domain"/>
    <property type="match status" value="1"/>
</dbReference>
<dbReference type="InterPro" id="IPR011990">
    <property type="entry name" value="TPR-like_helical_dom_sf"/>
</dbReference>
<dbReference type="SUPFAM" id="SSF48452">
    <property type="entry name" value="TPR-like"/>
    <property type="match status" value="1"/>
</dbReference>
<accession>O83062</accession>
<sequence>MDTRDLTAYSAEKFKELDRIIAEAKRQSILDVLKGICDEHLAHSKNSIIALYISGIISLSKQLLDDSCLVTLLTIFGDNHKNQIVEHLCTRVLEYGESKLALRALGECYKTSGNEQLYDVWERLVRIDYEEAEITRVLADKYEQEGNKEKATEFYKKALYRFIARRQNAAIKEVWTKLVALIPDDVEFFYREQKKISEKLGEGRGSVLMQDVYVYYKENEDWTTCINILKHILEHDEKDVWARKEIIENFRCKYRGHSQLEEYLKISNISQSWRNVFEAINDFEKHISFDEGSFVFHRTWGVGRIAKVCNDELLIDFAKRRAHTMLLKMAISALQTLGKEHIWVLKSVLKRQDLAAKIRQDPEWALKVIITSFDNNCNLKKVKQELVPSLLSVGEWTSWSTKARKILKESTGFAANPSNIDFYTVRSCPVSLEEKLAVEFKAQKNFFARIDILNTFMDKADTDSDAFREMFDYFNTFLRAFSVVDGNVIAAYLVVTRVSTVLPHLNACRPHGFADLYAHIADPRLVYTEIKDKGLKWEFVNSVKNFVSNWSDEYVKLFPEVLSLEILRALMEEGYKEKALRVVEACFEYYADNRAAVIWLFKTVRMSLGSRSCALPQNSGLSSSSTLWTLLIGKSLTGGTPLRTENLTAGSFGTLWE</sequence>